<keyword id="KW-0030">Aminoacyl-tRNA synthetase</keyword>
<keyword id="KW-0067">ATP-binding</keyword>
<keyword id="KW-0963">Cytoplasm</keyword>
<keyword id="KW-0436">Ligase</keyword>
<keyword id="KW-0547">Nucleotide-binding</keyword>
<keyword id="KW-0648">Protein biosynthesis</keyword>
<keyword id="KW-1185">Reference proteome</keyword>
<keyword id="KW-0694">RNA-binding</keyword>
<name>SYY_ROSCS</name>
<evidence type="ECO:0000255" key="1">
    <source>
        <dbReference type="HAMAP-Rule" id="MF_02006"/>
    </source>
</evidence>
<organism>
    <name type="scientific">Roseiflexus castenholzii (strain DSM 13941 / HLO8)</name>
    <dbReference type="NCBI Taxonomy" id="383372"/>
    <lineage>
        <taxon>Bacteria</taxon>
        <taxon>Bacillati</taxon>
        <taxon>Chloroflexota</taxon>
        <taxon>Chloroflexia</taxon>
        <taxon>Chloroflexales</taxon>
        <taxon>Roseiflexineae</taxon>
        <taxon>Roseiflexaceae</taxon>
        <taxon>Roseiflexus</taxon>
    </lineage>
</organism>
<dbReference type="EC" id="6.1.1.1" evidence="1"/>
<dbReference type="EMBL" id="CP000804">
    <property type="protein sequence ID" value="ABU57884.1"/>
    <property type="molecule type" value="Genomic_DNA"/>
</dbReference>
<dbReference type="RefSeq" id="WP_012120309.1">
    <property type="nucleotide sequence ID" value="NC_009767.1"/>
</dbReference>
<dbReference type="SMR" id="A7NK64"/>
<dbReference type="STRING" id="383372.Rcas_1792"/>
<dbReference type="KEGG" id="rca:Rcas_1792"/>
<dbReference type="eggNOG" id="COG0162">
    <property type="taxonomic scope" value="Bacteria"/>
</dbReference>
<dbReference type="HOGENOM" id="CLU_024003_0_3_0"/>
<dbReference type="OrthoDB" id="9804243at2"/>
<dbReference type="Proteomes" id="UP000000263">
    <property type="component" value="Chromosome"/>
</dbReference>
<dbReference type="GO" id="GO:0005829">
    <property type="term" value="C:cytosol"/>
    <property type="evidence" value="ECO:0007669"/>
    <property type="project" value="TreeGrafter"/>
</dbReference>
<dbReference type="GO" id="GO:0005524">
    <property type="term" value="F:ATP binding"/>
    <property type="evidence" value="ECO:0007669"/>
    <property type="project" value="UniProtKB-UniRule"/>
</dbReference>
<dbReference type="GO" id="GO:0003723">
    <property type="term" value="F:RNA binding"/>
    <property type="evidence" value="ECO:0007669"/>
    <property type="project" value="UniProtKB-KW"/>
</dbReference>
<dbReference type="GO" id="GO:0004831">
    <property type="term" value="F:tyrosine-tRNA ligase activity"/>
    <property type="evidence" value="ECO:0007669"/>
    <property type="project" value="UniProtKB-UniRule"/>
</dbReference>
<dbReference type="GO" id="GO:0006437">
    <property type="term" value="P:tyrosyl-tRNA aminoacylation"/>
    <property type="evidence" value="ECO:0007669"/>
    <property type="project" value="UniProtKB-UniRule"/>
</dbReference>
<dbReference type="CDD" id="cd00165">
    <property type="entry name" value="S4"/>
    <property type="match status" value="1"/>
</dbReference>
<dbReference type="CDD" id="cd00805">
    <property type="entry name" value="TyrRS_core"/>
    <property type="match status" value="1"/>
</dbReference>
<dbReference type="FunFam" id="1.10.240.10:FF:000001">
    <property type="entry name" value="Tyrosine--tRNA ligase"/>
    <property type="match status" value="1"/>
</dbReference>
<dbReference type="FunFam" id="3.40.50.620:FF:000008">
    <property type="entry name" value="Tyrosine--tRNA ligase"/>
    <property type="match status" value="1"/>
</dbReference>
<dbReference type="Gene3D" id="3.40.50.620">
    <property type="entry name" value="HUPs"/>
    <property type="match status" value="1"/>
</dbReference>
<dbReference type="Gene3D" id="3.10.290.10">
    <property type="entry name" value="RNA-binding S4 domain"/>
    <property type="match status" value="1"/>
</dbReference>
<dbReference type="Gene3D" id="1.10.240.10">
    <property type="entry name" value="Tyrosyl-Transfer RNA Synthetase"/>
    <property type="match status" value="1"/>
</dbReference>
<dbReference type="HAMAP" id="MF_02006">
    <property type="entry name" value="Tyr_tRNA_synth_type1"/>
    <property type="match status" value="1"/>
</dbReference>
<dbReference type="InterPro" id="IPR001412">
    <property type="entry name" value="aa-tRNA-synth_I_CS"/>
</dbReference>
<dbReference type="InterPro" id="IPR002305">
    <property type="entry name" value="aa-tRNA-synth_Ic"/>
</dbReference>
<dbReference type="InterPro" id="IPR014729">
    <property type="entry name" value="Rossmann-like_a/b/a_fold"/>
</dbReference>
<dbReference type="InterPro" id="IPR036986">
    <property type="entry name" value="S4_RNA-bd_sf"/>
</dbReference>
<dbReference type="InterPro" id="IPR054608">
    <property type="entry name" value="SYY-like_C"/>
</dbReference>
<dbReference type="InterPro" id="IPR002307">
    <property type="entry name" value="Tyr-tRNA-ligase"/>
</dbReference>
<dbReference type="InterPro" id="IPR024088">
    <property type="entry name" value="Tyr-tRNA-ligase_bac-type"/>
</dbReference>
<dbReference type="InterPro" id="IPR024107">
    <property type="entry name" value="Tyr-tRNA-ligase_bac_1"/>
</dbReference>
<dbReference type="NCBIfam" id="TIGR00234">
    <property type="entry name" value="tyrS"/>
    <property type="match status" value="1"/>
</dbReference>
<dbReference type="PANTHER" id="PTHR11766:SF0">
    <property type="entry name" value="TYROSINE--TRNA LIGASE, MITOCHONDRIAL"/>
    <property type="match status" value="1"/>
</dbReference>
<dbReference type="PANTHER" id="PTHR11766">
    <property type="entry name" value="TYROSYL-TRNA SYNTHETASE"/>
    <property type="match status" value="1"/>
</dbReference>
<dbReference type="Pfam" id="PF22421">
    <property type="entry name" value="SYY_C-terminal"/>
    <property type="match status" value="1"/>
</dbReference>
<dbReference type="Pfam" id="PF00579">
    <property type="entry name" value="tRNA-synt_1b"/>
    <property type="match status" value="1"/>
</dbReference>
<dbReference type="PRINTS" id="PR01040">
    <property type="entry name" value="TRNASYNTHTYR"/>
</dbReference>
<dbReference type="SUPFAM" id="SSF55174">
    <property type="entry name" value="Alpha-L RNA-binding motif"/>
    <property type="match status" value="1"/>
</dbReference>
<dbReference type="SUPFAM" id="SSF52374">
    <property type="entry name" value="Nucleotidylyl transferase"/>
    <property type="match status" value="1"/>
</dbReference>
<dbReference type="PROSITE" id="PS00178">
    <property type="entry name" value="AA_TRNA_LIGASE_I"/>
    <property type="match status" value="1"/>
</dbReference>
<dbReference type="PROSITE" id="PS50889">
    <property type="entry name" value="S4"/>
    <property type="match status" value="1"/>
</dbReference>
<gene>
    <name evidence="1" type="primary">tyrS</name>
    <name type="ordered locus">Rcas_1792</name>
</gene>
<proteinExistence type="inferred from homology"/>
<feature type="chain" id="PRO_1000088618" description="Tyrosine--tRNA ligase">
    <location>
        <begin position="1"/>
        <end position="424"/>
    </location>
</feature>
<feature type="domain" description="S4 RNA-binding" evidence="1">
    <location>
        <begin position="357"/>
        <end position="424"/>
    </location>
</feature>
<feature type="short sequence motif" description="'HIGH' region">
    <location>
        <begin position="38"/>
        <end position="47"/>
    </location>
</feature>
<feature type="short sequence motif" description="'KMSKS' region">
    <location>
        <begin position="230"/>
        <end position="234"/>
    </location>
</feature>
<feature type="binding site" evidence="1">
    <location>
        <position position="33"/>
    </location>
    <ligand>
        <name>L-tyrosine</name>
        <dbReference type="ChEBI" id="CHEBI:58315"/>
    </ligand>
</feature>
<feature type="binding site" evidence="1">
    <location>
        <position position="170"/>
    </location>
    <ligand>
        <name>L-tyrosine</name>
        <dbReference type="ChEBI" id="CHEBI:58315"/>
    </ligand>
</feature>
<feature type="binding site" evidence="1">
    <location>
        <position position="174"/>
    </location>
    <ligand>
        <name>L-tyrosine</name>
        <dbReference type="ChEBI" id="CHEBI:58315"/>
    </ligand>
</feature>
<feature type="binding site" evidence="1">
    <location>
        <position position="233"/>
    </location>
    <ligand>
        <name>ATP</name>
        <dbReference type="ChEBI" id="CHEBI:30616"/>
    </ligand>
</feature>
<protein>
    <recommendedName>
        <fullName evidence="1">Tyrosine--tRNA ligase</fullName>
        <ecNumber evidence="1">6.1.1.1</ecNumber>
    </recommendedName>
    <alternativeName>
        <fullName evidence="1">Tyrosyl-tRNA synthetase</fullName>
        <shortName evidence="1">TyrRS</shortName>
    </alternativeName>
</protein>
<comment type="function">
    <text evidence="1">Catalyzes the attachment of tyrosine to tRNA(Tyr) in a two-step reaction: tyrosine is first activated by ATP to form Tyr-AMP and then transferred to the acceptor end of tRNA(Tyr).</text>
</comment>
<comment type="catalytic activity">
    <reaction evidence="1">
        <text>tRNA(Tyr) + L-tyrosine + ATP = L-tyrosyl-tRNA(Tyr) + AMP + diphosphate + H(+)</text>
        <dbReference type="Rhea" id="RHEA:10220"/>
        <dbReference type="Rhea" id="RHEA-COMP:9706"/>
        <dbReference type="Rhea" id="RHEA-COMP:9707"/>
        <dbReference type="ChEBI" id="CHEBI:15378"/>
        <dbReference type="ChEBI" id="CHEBI:30616"/>
        <dbReference type="ChEBI" id="CHEBI:33019"/>
        <dbReference type="ChEBI" id="CHEBI:58315"/>
        <dbReference type="ChEBI" id="CHEBI:78442"/>
        <dbReference type="ChEBI" id="CHEBI:78536"/>
        <dbReference type="ChEBI" id="CHEBI:456215"/>
        <dbReference type="EC" id="6.1.1.1"/>
    </reaction>
</comment>
<comment type="subunit">
    <text evidence="1">Homodimer.</text>
</comment>
<comment type="subcellular location">
    <subcellularLocation>
        <location evidence="1">Cytoplasm</location>
    </subcellularLocation>
</comment>
<comment type="similarity">
    <text evidence="1">Belongs to the class-I aminoacyl-tRNA synthetase family. TyrS type 1 subfamily.</text>
</comment>
<sequence length="424" mass="47406">MTTILDELRWRGLLYESSDGLDDLLERERVTLYIGFDPSADSLHIGHLLPLLTLARFQRWGHTPIALAGGGTGLIGDPSGKTQERPLLSKEQVAANVEAIKRQLAQFLDFNAGDHSAMLLNNAEWLTRLSLMDFLRDVGKHLTVNYMLAKDSVRSRMMSETGISFTEFSYMLLQAYDFAYLFEHYGCKLQAGGSDQWGNITAGIELIRRTSGQKAYGLVYPLVTKADGTKFGKTESGAVWLDPKRTSPYRFYQFWYNVDDADVGKYLRYFTWLSAAEIEELEQITARQPERRTAQQRLAREVTRMVHGEAALARAEEASQALFGGSLASLSADDVADIFEDVPSITLPRQDLEGDGMSLIDALVRCGIATSKSDARRAIEGGGIYINNVQSADVGRRLTLHDSIDGQCIVLRKGRRHYHLIRLV</sequence>
<accession>A7NK64</accession>
<reference key="1">
    <citation type="submission" date="2007-08" db="EMBL/GenBank/DDBJ databases">
        <title>Complete sequence of Roseiflexus castenholzii DSM 13941.</title>
        <authorList>
            <consortium name="US DOE Joint Genome Institute"/>
            <person name="Copeland A."/>
            <person name="Lucas S."/>
            <person name="Lapidus A."/>
            <person name="Barry K."/>
            <person name="Glavina del Rio T."/>
            <person name="Dalin E."/>
            <person name="Tice H."/>
            <person name="Pitluck S."/>
            <person name="Thompson L.S."/>
            <person name="Brettin T."/>
            <person name="Bruce D."/>
            <person name="Detter J.C."/>
            <person name="Han C."/>
            <person name="Tapia R."/>
            <person name="Schmutz J."/>
            <person name="Larimer F."/>
            <person name="Land M."/>
            <person name="Hauser L."/>
            <person name="Kyrpides N."/>
            <person name="Mikhailova N."/>
            <person name="Bryant D.A."/>
            <person name="Hanada S."/>
            <person name="Tsukatani Y."/>
            <person name="Richardson P."/>
        </authorList>
    </citation>
    <scope>NUCLEOTIDE SEQUENCE [LARGE SCALE GENOMIC DNA]</scope>
    <source>
        <strain>DSM 13941 / HLO8</strain>
    </source>
</reference>